<sequence length="116" mass="12274">MNATTEMESPLVFTDSAASKVKSLIDEEGNPDLKLRVFVSGGGCSGFQYGFTFDEAQNADDTVMVKNGVTLLVDSMSFQYLVGAEIDYSEGLEGAQFVIKNPNATTTCGCGSSFSA</sequence>
<gene>
    <name evidence="1" type="primary">erpA</name>
    <name type="ordered locus">Tbd_0456</name>
</gene>
<organism>
    <name type="scientific">Thiobacillus denitrificans (strain ATCC 25259 / T1)</name>
    <dbReference type="NCBI Taxonomy" id="292415"/>
    <lineage>
        <taxon>Bacteria</taxon>
        <taxon>Pseudomonadati</taxon>
        <taxon>Pseudomonadota</taxon>
        <taxon>Betaproteobacteria</taxon>
        <taxon>Nitrosomonadales</taxon>
        <taxon>Thiobacillaceae</taxon>
        <taxon>Thiobacillus</taxon>
    </lineage>
</organism>
<dbReference type="EMBL" id="CP000116">
    <property type="protein sequence ID" value="AAZ96409.1"/>
    <property type="molecule type" value="Genomic_DNA"/>
</dbReference>
<dbReference type="RefSeq" id="WP_011310968.1">
    <property type="nucleotide sequence ID" value="NC_007404.1"/>
</dbReference>
<dbReference type="SMR" id="Q3SF18"/>
<dbReference type="STRING" id="292415.Tbd_0456"/>
<dbReference type="KEGG" id="tbd:Tbd_0456"/>
<dbReference type="eggNOG" id="COG0316">
    <property type="taxonomic scope" value="Bacteria"/>
</dbReference>
<dbReference type="HOGENOM" id="CLU_069054_5_3_4"/>
<dbReference type="OrthoDB" id="9801228at2"/>
<dbReference type="Proteomes" id="UP000008291">
    <property type="component" value="Chromosome"/>
</dbReference>
<dbReference type="GO" id="GO:0051537">
    <property type="term" value="F:2 iron, 2 sulfur cluster binding"/>
    <property type="evidence" value="ECO:0007669"/>
    <property type="project" value="UniProtKB-ARBA"/>
</dbReference>
<dbReference type="GO" id="GO:0051539">
    <property type="term" value="F:4 iron, 4 sulfur cluster binding"/>
    <property type="evidence" value="ECO:0007669"/>
    <property type="project" value="TreeGrafter"/>
</dbReference>
<dbReference type="GO" id="GO:0005506">
    <property type="term" value="F:iron ion binding"/>
    <property type="evidence" value="ECO:0007669"/>
    <property type="project" value="UniProtKB-UniRule"/>
</dbReference>
<dbReference type="GO" id="GO:0016226">
    <property type="term" value="P:iron-sulfur cluster assembly"/>
    <property type="evidence" value="ECO:0007669"/>
    <property type="project" value="UniProtKB-UniRule"/>
</dbReference>
<dbReference type="FunFam" id="2.60.300.12:FF:000002">
    <property type="entry name" value="Iron-sulfur cluster insertion protein ErpA"/>
    <property type="match status" value="1"/>
</dbReference>
<dbReference type="Gene3D" id="2.60.300.12">
    <property type="entry name" value="HesB-like domain"/>
    <property type="match status" value="1"/>
</dbReference>
<dbReference type="HAMAP" id="MF_01380">
    <property type="entry name" value="Fe_S_insert_ErpA"/>
    <property type="match status" value="1"/>
</dbReference>
<dbReference type="InterPro" id="IPR000361">
    <property type="entry name" value="FeS_biogenesis"/>
</dbReference>
<dbReference type="InterPro" id="IPR016092">
    <property type="entry name" value="FeS_cluster_insertion"/>
</dbReference>
<dbReference type="InterPro" id="IPR017870">
    <property type="entry name" value="FeS_cluster_insertion_CS"/>
</dbReference>
<dbReference type="InterPro" id="IPR023063">
    <property type="entry name" value="FeS_cluster_insertion_RrpA"/>
</dbReference>
<dbReference type="InterPro" id="IPR035903">
    <property type="entry name" value="HesB-like_dom_sf"/>
</dbReference>
<dbReference type="NCBIfam" id="TIGR00049">
    <property type="entry name" value="iron-sulfur cluster assembly accessory protein"/>
    <property type="match status" value="1"/>
</dbReference>
<dbReference type="NCBIfam" id="NF010147">
    <property type="entry name" value="PRK13623.1"/>
    <property type="match status" value="1"/>
</dbReference>
<dbReference type="PANTHER" id="PTHR43011">
    <property type="entry name" value="IRON-SULFUR CLUSTER ASSEMBLY 2 HOMOLOG, MITOCHONDRIAL"/>
    <property type="match status" value="1"/>
</dbReference>
<dbReference type="PANTHER" id="PTHR43011:SF1">
    <property type="entry name" value="IRON-SULFUR CLUSTER ASSEMBLY 2 HOMOLOG, MITOCHONDRIAL"/>
    <property type="match status" value="1"/>
</dbReference>
<dbReference type="Pfam" id="PF01521">
    <property type="entry name" value="Fe-S_biosyn"/>
    <property type="match status" value="1"/>
</dbReference>
<dbReference type="SUPFAM" id="SSF89360">
    <property type="entry name" value="HesB-like domain"/>
    <property type="match status" value="1"/>
</dbReference>
<dbReference type="PROSITE" id="PS01152">
    <property type="entry name" value="HESB"/>
    <property type="match status" value="1"/>
</dbReference>
<evidence type="ECO:0000255" key="1">
    <source>
        <dbReference type="HAMAP-Rule" id="MF_01380"/>
    </source>
</evidence>
<feature type="chain" id="PRO_0000311564" description="Putative iron-sulfur cluster insertion protein ErpA">
    <location>
        <begin position="1"/>
        <end position="116"/>
    </location>
</feature>
<feature type="binding site" evidence="1">
    <location>
        <position position="44"/>
    </location>
    <ligand>
        <name>iron-sulfur cluster</name>
        <dbReference type="ChEBI" id="CHEBI:30408"/>
    </ligand>
</feature>
<feature type="binding site" evidence="1">
    <location>
        <position position="108"/>
    </location>
    <ligand>
        <name>iron-sulfur cluster</name>
        <dbReference type="ChEBI" id="CHEBI:30408"/>
    </ligand>
</feature>
<feature type="binding site" evidence="1">
    <location>
        <position position="110"/>
    </location>
    <ligand>
        <name>iron-sulfur cluster</name>
        <dbReference type="ChEBI" id="CHEBI:30408"/>
    </ligand>
</feature>
<reference key="1">
    <citation type="journal article" date="2006" name="J. Bacteriol.">
        <title>The genome sequence of the obligately chemolithoautotrophic, facultatively anaerobic bacterium Thiobacillus denitrificans.</title>
        <authorList>
            <person name="Beller H.R."/>
            <person name="Chain P.S."/>
            <person name="Letain T.E."/>
            <person name="Chakicherla A."/>
            <person name="Larimer F.W."/>
            <person name="Richardson P.M."/>
            <person name="Coleman M.A."/>
            <person name="Wood A.P."/>
            <person name="Kelly D.P."/>
        </authorList>
    </citation>
    <scope>NUCLEOTIDE SEQUENCE [LARGE SCALE GENOMIC DNA]</scope>
    <source>
        <strain>ATCC 25259 / T1</strain>
    </source>
</reference>
<name>ERPA_THIDA</name>
<proteinExistence type="inferred from homology"/>
<protein>
    <recommendedName>
        <fullName evidence="1">Putative iron-sulfur cluster insertion protein ErpA</fullName>
    </recommendedName>
</protein>
<keyword id="KW-0408">Iron</keyword>
<keyword id="KW-0411">Iron-sulfur</keyword>
<keyword id="KW-0479">Metal-binding</keyword>
<keyword id="KW-1185">Reference proteome</keyword>
<comment type="function">
    <text evidence="1">Required for insertion of 4Fe-4S clusters.</text>
</comment>
<comment type="cofactor">
    <cofactor evidence="1">
        <name>iron-sulfur cluster</name>
        <dbReference type="ChEBI" id="CHEBI:30408"/>
    </cofactor>
    <text evidence="1">Binds 1 iron-sulfur cluster per subunit.</text>
</comment>
<comment type="subunit">
    <text evidence="1">Homodimer.</text>
</comment>
<comment type="similarity">
    <text evidence="1">Belongs to the HesB/IscA family.</text>
</comment>
<accession>Q3SF18</accession>